<name>POTA_STAS1</name>
<keyword id="KW-0067">ATP-binding</keyword>
<keyword id="KW-1003">Cell membrane</keyword>
<keyword id="KW-0472">Membrane</keyword>
<keyword id="KW-0547">Nucleotide-binding</keyword>
<keyword id="KW-1185">Reference proteome</keyword>
<keyword id="KW-1278">Translocase</keyword>
<keyword id="KW-0813">Transport</keyword>
<reference key="1">
    <citation type="journal article" date="2005" name="Proc. Natl. Acad. Sci. U.S.A.">
        <title>Whole genome sequence of Staphylococcus saprophyticus reveals the pathogenesis of uncomplicated urinary tract infection.</title>
        <authorList>
            <person name="Kuroda M."/>
            <person name="Yamashita A."/>
            <person name="Hirakawa H."/>
            <person name="Kumano M."/>
            <person name="Morikawa K."/>
            <person name="Higashide M."/>
            <person name="Maruyama A."/>
            <person name="Inose Y."/>
            <person name="Matoba K."/>
            <person name="Toh H."/>
            <person name="Kuhara S."/>
            <person name="Hattori M."/>
            <person name="Ohta T."/>
        </authorList>
    </citation>
    <scope>NUCLEOTIDE SEQUENCE [LARGE SCALE GENOMIC DNA]</scope>
    <source>
        <strain>ATCC 15305 / DSM 20229 / NCIMB 8711 / NCTC 7292 / S-41</strain>
    </source>
</reference>
<feature type="chain" id="PRO_0000286297" description="Spermidine/putrescine import ATP-binding protein PotA">
    <location>
        <begin position="1"/>
        <end position="364"/>
    </location>
</feature>
<feature type="domain" description="ABC transporter" evidence="1">
    <location>
        <begin position="5"/>
        <end position="235"/>
    </location>
</feature>
<feature type="binding site" evidence="1">
    <location>
        <begin position="37"/>
        <end position="44"/>
    </location>
    <ligand>
        <name>ATP</name>
        <dbReference type="ChEBI" id="CHEBI:30616"/>
    </ligand>
</feature>
<dbReference type="EC" id="7.6.2.11" evidence="1"/>
<dbReference type="EMBL" id="AP008934">
    <property type="protein sequence ID" value="BAE18835.1"/>
    <property type="molecule type" value="Genomic_DNA"/>
</dbReference>
<dbReference type="RefSeq" id="WP_011303413.1">
    <property type="nucleotide sequence ID" value="NZ_MTGA01000039.1"/>
</dbReference>
<dbReference type="SMR" id="Q49WM4"/>
<dbReference type="GeneID" id="3616501"/>
<dbReference type="KEGG" id="ssp:SSP1690"/>
<dbReference type="eggNOG" id="COG3842">
    <property type="taxonomic scope" value="Bacteria"/>
</dbReference>
<dbReference type="HOGENOM" id="CLU_000604_1_1_9"/>
<dbReference type="OrthoDB" id="9790614at2"/>
<dbReference type="Proteomes" id="UP000006371">
    <property type="component" value="Chromosome"/>
</dbReference>
<dbReference type="GO" id="GO:0043190">
    <property type="term" value="C:ATP-binding cassette (ABC) transporter complex"/>
    <property type="evidence" value="ECO:0007669"/>
    <property type="project" value="InterPro"/>
</dbReference>
<dbReference type="GO" id="GO:0015594">
    <property type="term" value="F:ABC-type putrescine transporter activity"/>
    <property type="evidence" value="ECO:0007669"/>
    <property type="project" value="InterPro"/>
</dbReference>
<dbReference type="GO" id="GO:0005524">
    <property type="term" value="F:ATP binding"/>
    <property type="evidence" value="ECO:0007669"/>
    <property type="project" value="UniProtKB-KW"/>
</dbReference>
<dbReference type="GO" id="GO:0016887">
    <property type="term" value="F:ATP hydrolysis activity"/>
    <property type="evidence" value="ECO:0007669"/>
    <property type="project" value="InterPro"/>
</dbReference>
<dbReference type="CDD" id="cd03300">
    <property type="entry name" value="ABC_PotA_N"/>
    <property type="match status" value="1"/>
</dbReference>
<dbReference type="FunFam" id="3.40.50.300:FF:000133">
    <property type="entry name" value="Spermidine/putrescine import ATP-binding protein PotA"/>
    <property type="match status" value="1"/>
</dbReference>
<dbReference type="Gene3D" id="2.40.50.100">
    <property type="match status" value="1"/>
</dbReference>
<dbReference type="Gene3D" id="3.40.50.300">
    <property type="entry name" value="P-loop containing nucleotide triphosphate hydrolases"/>
    <property type="match status" value="1"/>
</dbReference>
<dbReference type="InterPro" id="IPR003593">
    <property type="entry name" value="AAA+_ATPase"/>
</dbReference>
<dbReference type="InterPro" id="IPR050093">
    <property type="entry name" value="ABC_SmlMolc_Importer"/>
</dbReference>
<dbReference type="InterPro" id="IPR003439">
    <property type="entry name" value="ABC_transporter-like_ATP-bd"/>
</dbReference>
<dbReference type="InterPro" id="IPR017871">
    <property type="entry name" value="ABC_transporter-like_CS"/>
</dbReference>
<dbReference type="InterPro" id="IPR008995">
    <property type="entry name" value="Mo/tungstate-bd_C_term_dom"/>
</dbReference>
<dbReference type="InterPro" id="IPR027417">
    <property type="entry name" value="P-loop_NTPase"/>
</dbReference>
<dbReference type="InterPro" id="IPR017879">
    <property type="entry name" value="PotA_ATP-bd"/>
</dbReference>
<dbReference type="InterPro" id="IPR013611">
    <property type="entry name" value="Transp-assoc_OB_typ2"/>
</dbReference>
<dbReference type="PANTHER" id="PTHR42781">
    <property type="entry name" value="SPERMIDINE/PUTRESCINE IMPORT ATP-BINDING PROTEIN POTA"/>
    <property type="match status" value="1"/>
</dbReference>
<dbReference type="PANTHER" id="PTHR42781:SF4">
    <property type="entry name" value="SPERMIDINE_PUTRESCINE IMPORT ATP-BINDING PROTEIN POTA"/>
    <property type="match status" value="1"/>
</dbReference>
<dbReference type="Pfam" id="PF00005">
    <property type="entry name" value="ABC_tran"/>
    <property type="match status" value="1"/>
</dbReference>
<dbReference type="Pfam" id="PF08402">
    <property type="entry name" value="TOBE_2"/>
    <property type="match status" value="1"/>
</dbReference>
<dbReference type="SMART" id="SM00382">
    <property type="entry name" value="AAA"/>
    <property type="match status" value="1"/>
</dbReference>
<dbReference type="SUPFAM" id="SSF50331">
    <property type="entry name" value="MOP-like"/>
    <property type="match status" value="1"/>
</dbReference>
<dbReference type="SUPFAM" id="SSF52540">
    <property type="entry name" value="P-loop containing nucleoside triphosphate hydrolases"/>
    <property type="match status" value="1"/>
</dbReference>
<dbReference type="PROSITE" id="PS00211">
    <property type="entry name" value="ABC_TRANSPORTER_1"/>
    <property type="match status" value="1"/>
</dbReference>
<dbReference type="PROSITE" id="PS50893">
    <property type="entry name" value="ABC_TRANSPORTER_2"/>
    <property type="match status" value="1"/>
</dbReference>
<dbReference type="PROSITE" id="PS51305">
    <property type="entry name" value="POTA"/>
    <property type="match status" value="1"/>
</dbReference>
<organism>
    <name type="scientific">Staphylococcus saprophyticus subsp. saprophyticus (strain ATCC 15305 / DSM 20229 / NCIMB 8711 / NCTC 7292 / S-41)</name>
    <dbReference type="NCBI Taxonomy" id="342451"/>
    <lineage>
        <taxon>Bacteria</taxon>
        <taxon>Bacillati</taxon>
        <taxon>Bacillota</taxon>
        <taxon>Bacilli</taxon>
        <taxon>Bacillales</taxon>
        <taxon>Staphylococcaceae</taxon>
        <taxon>Staphylococcus</taxon>
    </lineage>
</organism>
<evidence type="ECO:0000255" key="1">
    <source>
        <dbReference type="HAMAP-Rule" id="MF_01726"/>
    </source>
</evidence>
<sequence length="364" mass="41481">MEPLLSFKSVSKQYDDMQILDKIDIDIESGYFYTLLGPSGCGKTTILKLIAGFEEADNGDIIYQGKSINHLSANKRKVNTVFQDYALFPHLNVYDNIAFGLKLKKLAKSEIKRKVHEALKLVKLEGYESRTIEGISGGQKQRIAIARAIVNEPEILLLDESLSALDLKLRTEMQYELREIQSRLGITFIFVTHDQEEALALSDYIFVMKDGKIQQFGTPIDIYDEPVNRFVADFIGESNIVEGKMVKDYLVNIYGQDFECVDMGIPEQKKVEIVIRPEDISLIDAKSGLFEVTVDSMLFRGVHYEINCIDRKGYEWMIHSTKKAEVGSKVGLYFDPEAIHIMVPGETEEEFDKRIESYEEQDNA</sequence>
<proteinExistence type="inferred from homology"/>
<accession>Q49WM4</accession>
<comment type="function">
    <text evidence="1">Part of the ABC transporter complex PotABCD involved in spermidine/putrescine import. Responsible for energy coupling to the transport system.</text>
</comment>
<comment type="catalytic activity">
    <reaction evidence="1">
        <text>ATP + H2O + polyamine-[polyamine-binding protein]Side 1 = ADP + phosphate + polyamineSide 2 + [polyamine-binding protein]Side 1.</text>
        <dbReference type="EC" id="7.6.2.11"/>
    </reaction>
</comment>
<comment type="subunit">
    <text evidence="1">The complex is composed of two ATP-binding proteins (PotA), two transmembrane proteins (PotB and PotC) and a solute-binding protein (PotD).</text>
</comment>
<comment type="subcellular location">
    <subcellularLocation>
        <location evidence="1">Cell membrane</location>
        <topology evidence="1">Peripheral membrane protein</topology>
    </subcellularLocation>
</comment>
<comment type="similarity">
    <text evidence="1">Belongs to the ABC transporter superfamily. Spermidine/putrescine importer (TC 3.A.1.11.1) family.</text>
</comment>
<protein>
    <recommendedName>
        <fullName evidence="1">Spermidine/putrescine import ATP-binding protein PotA</fullName>
        <ecNumber evidence="1">7.6.2.11</ecNumber>
    </recommendedName>
</protein>
<gene>
    <name evidence="1" type="primary">potA</name>
    <name type="ordered locus">SSP1690</name>
</gene>